<protein>
    <recommendedName>
        <fullName evidence="1">Large ribosomal subunit protein uL24</fullName>
    </recommendedName>
    <alternativeName>
        <fullName evidence="2">50S ribosomal protein L24</fullName>
    </alternativeName>
</protein>
<sequence>MRVKMHVKKGDTVLVASGKYKGRVGKVKEVLPKKYAVIVEGVNIVKKAVRVSPKYPQGGFIEKEAPLHASKVRPICPACGKPTRVRKKFLENGKKIRVCAKCGGALDTEE</sequence>
<evidence type="ECO:0000255" key="1">
    <source>
        <dbReference type="HAMAP-Rule" id="MF_01326"/>
    </source>
</evidence>
<evidence type="ECO:0000305" key="2"/>
<evidence type="ECO:0007829" key="3">
    <source>
        <dbReference type="PDB" id="4V63"/>
    </source>
</evidence>
<evidence type="ECO:0007829" key="4">
    <source>
        <dbReference type="PDB" id="4V67"/>
    </source>
</evidence>
<evidence type="ECO:0007829" key="5">
    <source>
        <dbReference type="PDB" id="4V84"/>
    </source>
</evidence>
<comment type="function">
    <text evidence="1">One of two assembly initiator proteins, it binds directly to the 5'-end of the 23S rRNA, where it nucleates assembly of the 50S subunit.</text>
</comment>
<comment type="function">
    <text evidence="1">One of the proteins that surrounds the polypeptide exit tunnel on the outside of the subunit.</text>
</comment>
<comment type="subunit">
    <text>Part of the 50S ribosomal subunit.</text>
</comment>
<comment type="similarity">
    <text evidence="1">Belongs to the universal ribosomal protein uL24 family.</text>
</comment>
<feature type="chain" id="PRO_0000241679" description="Large ribosomal subunit protein uL24">
    <location>
        <begin position="1"/>
        <end position="110"/>
    </location>
</feature>
<feature type="strand" evidence="4">
    <location>
        <begin position="10"/>
        <end position="15"/>
    </location>
</feature>
<feature type="turn" evidence="4">
    <location>
        <begin position="19"/>
        <end position="22"/>
    </location>
</feature>
<feature type="strand" evidence="4">
    <location>
        <begin position="24"/>
        <end position="26"/>
    </location>
</feature>
<feature type="strand" evidence="4">
    <location>
        <begin position="29"/>
        <end position="31"/>
    </location>
</feature>
<feature type="helix" evidence="4">
    <location>
        <begin position="32"/>
        <end position="34"/>
    </location>
</feature>
<feature type="strand" evidence="4">
    <location>
        <begin position="36"/>
        <end position="38"/>
    </location>
</feature>
<feature type="strand" evidence="5">
    <location>
        <begin position="40"/>
        <end position="42"/>
    </location>
</feature>
<feature type="strand" evidence="4">
    <location>
        <begin position="51"/>
        <end position="56"/>
    </location>
</feature>
<feature type="helix" evidence="4">
    <location>
        <begin position="69"/>
        <end position="71"/>
    </location>
</feature>
<feature type="strand" evidence="4">
    <location>
        <begin position="72"/>
        <end position="74"/>
    </location>
</feature>
<feature type="strand" evidence="4">
    <location>
        <begin position="76"/>
        <end position="79"/>
    </location>
</feature>
<feature type="strand" evidence="3">
    <location>
        <begin position="84"/>
        <end position="86"/>
    </location>
</feature>
<feature type="strand" evidence="4">
    <location>
        <begin position="89"/>
        <end position="91"/>
    </location>
</feature>
<feature type="strand" evidence="3">
    <location>
        <begin position="93"/>
        <end position="95"/>
    </location>
</feature>
<feature type="strand" evidence="4">
    <location>
        <begin position="97"/>
        <end position="99"/>
    </location>
</feature>
<reference key="1">
    <citation type="journal article" date="2004" name="Nat. Biotechnol.">
        <title>The genome sequence of the extreme thermophile Thermus thermophilus.</title>
        <authorList>
            <person name="Henne A."/>
            <person name="Brueggemann H."/>
            <person name="Raasch C."/>
            <person name="Wiezer A."/>
            <person name="Hartsch T."/>
            <person name="Liesegang H."/>
            <person name="Johann A."/>
            <person name="Lienard T."/>
            <person name="Gohl O."/>
            <person name="Martinez-Arias R."/>
            <person name="Jacobi C."/>
            <person name="Starkuviene V."/>
            <person name="Schlenczeck S."/>
            <person name="Dencker S."/>
            <person name="Huber R."/>
            <person name="Klenk H.-P."/>
            <person name="Kramer W."/>
            <person name="Merkl R."/>
            <person name="Gottschalk G."/>
            <person name="Fritz H.-J."/>
        </authorList>
    </citation>
    <scope>NUCLEOTIDE SEQUENCE [LARGE SCALE GENOMIC DNA]</scope>
    <source>
        <strain>ATCC BAA-163 / DSM 7039 / HB27</strain>
    </source>
</reference>
<name>RL24_THET2</name>
<accession>Q72I15</accession>
<proteinExistence type="evidence at protein level"/>
<gene>
    <name evidence="1" type="primary">rplX</name>
    <name type="ordered locus">TT_C1317</name>
</gene>
<keyword id="KW-0002">3D-structure</keyword>
<keyword id="KW-0687">Ribonucleoprotein</keyword>
<keyword id="KW-0689">Ribosomal protein</keyword>
<keyword id="KW-0694">RNA-binding</keyword>
<keyword id="KW-0699">rRNA-binding</keyword>
<dbReference type="EMBL" id="AE017221">
    <property type="protein sequence ID" value="AAS81659.1"/>
    <property type="molecule type" value="Genomic_DNA"/>
</dbReference>
<dbReference type="RefSeq" id="WP_011173707.1">
    <property type="nucleotide sequence ID" value="NC_005835.1"/>
</dbReference>
<dbReference type="PDB" id="4V4I">
    <property type="method" value="X-ray"/>
    <property type="resolution" value="3.71 A"/>
    <property type="chains" value="S=1-110"/>
</dbReference>
<dbReference type="PDB" id="4V4J">
    <property type="method" value="X-ray"/>
    <property type="resolution" value="3.83 A"/>
    <property type="chains" value="S=1-110"/>
</dbReference>
<dbReference type="PDB" id="4V63">
    <property type="method" value="X-ray"/>
    <property type="resolution" value="3.21 A"/>
    <property type="chains" value="BY/DY=1-110"/>
</dbReference>
<dbReference type="PDB" id="4V67">
    <property type="method" value="X-ray"/>
    <property type="resolution" value="3.00 A"/>
    <property type="chains" value="BY/DY=1-110"/>
</dbReference>
<dbReference type="PDB" id="4V7P">
    <property type="method" value="X-ray"/>
    <property type="resolution" value="3.62 A"/>
    <property type="chains" value="BU/CU=2-110"/>
</dbReference>
<dbReference type="PDB" id="4V83">
    <property type="method" value="X-ray"/>
    <property type="resolution" value="3.50 A"/>
    <property type="chains" value="BU/DU=2-101"/>
</dbReference>
<dbReference type="PDB" id="4V84">
    <property type="method" value="X-ray"/>
    <property type="resolution" value="3.40 A"/>
    <property type="chains" value="BU/DU=2-101"/>
</dbReference>
<dbReference type="PDB" id="4V9J">
    <property type="method" value="X-ray"/>
    <property type="resolution" value="3.86 A"/>
    <property type="chains" value="BY/DY=2-108"/>
</dbReference>
<dbReference type="PDB" id="4V9K">
    <property type="method" value="X-ray"/>
    <property type="resolution" value="3.50 A"/>
    <property type="chains" value="BY/DY=2-108"/>
</dbReference>
<dbReference type="PDB" id="4V9L">
    <property type="method" value="X-ray"/>
    <property type="resolution" value="3.50 A"/>
    <property type="chains" value="BY/DY=2-108"/>
</dbReference>
<dbReference type="PDB" id="4V9M">
    <property type="method" value="X-ray"/>
    <property type="resolution" value="4.00 A"/>
    <property type="chains" value="BY/DY=2-108"/>
</dbReference>
<dbReference type="PDB" id="4V9N">
    <property type="method" value="X-ray"/>
    <property type="resolution" value="3.40 A"/>
    <property type="chains" value="BY/DY=2-101"/>
</dbReference>
<dbReference type="PDB" id="4V9Q">
    <property type="method" value="X-ray"/>
    <property type="resolution" value="3.40 A"/>
    <property type="chains" value="AU/CU=2-101"/>
</dbReference>
<dbReference type="PDB" id="4W29">
    <property type="method" value="X-ray"/>
    <property type="resolution" value="3.80 A"/>
    <property type="chains" value="BY/DY=2-108"/>
</dbReference>
<dbReference type="PDB" id="4XEJ">
    <property type="method" value="X-ray"/>
    <property type="resolution" value="3.80 A"/>
    <property type="chains" value="AL24/BL24=2-101"/>
</dbReference>
<dbReference type="PDB" id="5J4D">
    <property type="method" value="X-ray"/>
    <property type="resolution" value="3.10 A"/>
    <property type="chains" value="AC/V=1-110"/>
</dbReference>
<dbReference type="PDB" id="5V8I">
    <property type="method" value="X-ray"/>
    <property type="resolution" value="3.25 A"/>
    <property type="chains" value="1Y/2Y=1-110"/>
</dbReference>
<dbReference type="PDB" id="6B4V">
    <property type="method" value="X-ray"/>
    <property type="resolution" value="3.40 A"/>
    <property type="chains" value="V/ZB=1-110"/>
</dbReference>
<dbReference type="PDB" id="6BOH">
    <property type="method" value="X-ray"/>
    <property type="resolution" value="3.40 A"/>
    <property type="chains" value="AC/V=1-110"/>
</dbReference>
<dbReference type="PDB" id="6BOK">
    <property type="method" value="X-ray"/>
    <property type="resolution" value="3.55 A"/>
    <property type="chains" value="V/YB=1-110"/>
</dbReference>
<dbReference type="PDB" id="6N1D">
    <property type="method" value="X-ray"/>
    <property type="resolution" value="3.20 A"/>
    <property type="chains" value="AL24/BL24=1-110"/>
</dbReference>
<dbReference type="PDBsum" id="4V4I"/>
<dbReference type="PDBsum" id="4V4J"/>
<dbReference type="PDBsum" id="4V63"/>
<dbReference type="PDBsum" id="4V67"/>
<dbReference type="PDBsum" id="4V7P"/>
<dbReference type="PDBsum" id="4V83"/>
<dbReference type="PDBsum" id="4V84"/>
<dbReference type="PDBsum" id="4V9J"/>
<dbReference type="PDBsum" id="4V9K"/>
<dbReference type="PDBsum" id="4V9L"/>
<dbReference type="PDBsum" id="4V9M"/>
<dbReference type="PDBsum" id="4V9N"/>
<dbReference type="PDBsum" id="4V9Q"/>
<dbReference type="PDBsum" id="4W29"/>
<dbReference type="PDBsum" id="4XEJ"/>
<dbReference type="PDBsum" id="5J4D"/>
<dbReference type="PDBsum" id="5V8I"/>
<dbReference type="PDBsum" id="6B4V"/>
<dbReference type="PDBsum" id="6BOH"/>
<dbReference type="PDBsum" id="6BOK"/>
<dbReference type="PDBsum" id="6N1D"/>
<dbReference type="SMR" id="Q72I15"/>
<dbReference type="IntAct" id="Q72I15">
    <property type="interactions" value="4"/>
</dbReference>
<dbReference type="GeneID" id="3169836"/>
<dbReference type="KEGG" id="tth:TT_C1317"/>
<dbReference type="eggNOG" id="COG0198">
    <property type="taxonomic scope" value="Bacteria"/>
</dbReference>
<dbReference type="HOGENOM" id="CLU_093315_2_3_0"/>
<dbReference type="OrthoDB" id="9807419at2"/>
<dbReference type="Proteomes" id="UP000000592">
    <property type="component" value="Chromosome"/>
</dbReference>
<dbReference type="GO" id="GO:1990904">
    <property type="term" value="C:ribonucleoprotein complex"/>
    <property type="evidence" value="ECO:0007669"/>
    <property type="project" value="UniProtKB-KW"/>
</dbReference>
<dbReference type="GO" id="GO:0005840">
    <property type="term" value="C:ribosome"/>
    <property type="evidence" value="ECO:0007669"/>
    <property type="project" value="UniProtKB-KW"/>
</dbReference>
<dbReference type="GO" id="GO:0019843">
    <property type="term" value="F:rRNA binding"/>
    <property type="evidence" value="ECO:0007669"/>
    <property type="project" value="UniProtKB-UniRule"/>
</dbReference>
<dbReference type="GO" id="GO:0003735">
    <property type="term" value="F:structural constituent of ribosome"/>
    <property type="evidence" value="ECO:0007669"/>
    <property type="project" value="InterPro"/>
</dbReference>
<dbReference type="GO" id="GO:0006412">
    <property type="term" value="P:translation"/>
    <property type="evidence" value="ECO:0007669"/>
    <property type="project" value="UniProtKB-UniRule"/>
</dbReference>
<dbReference type="CDD" id="cd06089">
    <property type="entry name" value="KOW_RPL26"/>
    <property type="match status" value="1"/>
</dbReference>
<dbReference type="Gene3D" id="2.30.30.30">
    <property type="match status" value="1"/>
</dbReference>
<dbReference type="HAMAP" id="MF_01326_B">
    <property type="entry name" value="Ribosomal_uL24_B"/>
    <property type="match status" value="1"/>
</dbReference>
<dbReference type="InterPro" id="IPR005824">
    <property type="entry name" value="KOW"/>
</dbReference>
<dbReference type="InterPro" id="IPR014722">
    <property type="entry name" value="Rib_uL2_dom2"/>
</dbReference>
<dbReference type="InterPro" id="IPR003256">
    <property type="entry name" value="Ribosomal_uL24"/>
</dbReference>
<dbReference type="InterPro" id="IPR005825">
    <property type="entry name" value="Ribosomal_uL24_CS"/>
</dbReference>
<dbReference type="InterPro" id="IPR041988">
    <property type="entry name" value="Ribosomal_uL24_KOW"/>
</dbReference>
<dbReference type="InterPro" id="IPR008991">
    <property type="entry name" value="Translation_prot_SH3-like_sf"/>
</dbReference>
<dbReference type="NCBIfam" id="TIGR01079">
    <property type="entry name" value="rplX_bact"/>
    <property type="match status" value="1"/>
</dbReference>
<dbReference type="PANTHER" id="PTHR12903">
    <property type="entry name" value="MITOCHONDRIAL RIBOSOMAL PROTEIN L24"/>
    <property type="match status" value="1"/>
</dbReference>
<dbReference type="Pfam" id="PF00467">
    <property type="entry name" value="KOW"/>
    <property type="match status" value="1"/>
</dbReference>
<dbReference type="Pfam" id="PF17136">
    <property type="entry name" value="ribosomal_L24"/>
    <property type="match status" value="1"/>
</dbReference>
<dbReference type="SMART" id="SM00739">
    <property type="entry name" value="KOW"/>
    <property type="match status" value="1"/>
</dbReference>
<dbReference type="SUPFAM" id="SSF50104">
    <property type="entry name" value="Translation proteins SH3-like domain"/>
    <property type="match status" value="1"/>
</dbReference>
<dbReference type="PROSITE" id="PS01108">
    <property type="entry name" value="RIBOSOMAL_L24"/>
    <property type="match status" value="1"/>
</dbReference>
<organism>
    <name type="scientific">Thermus thermophilus (strain ATCC BAA-163 / DSM 7039 / HB27)</name>
    <dbReference type="NCBI Taxonomy" id="262724"/>
    <lineage>
        <taxon>Bacteria</taxon>
        <taxon>Thermotogati</taxon>
        <taxon>Deinococcota</taxon>
        <taxon>Deinococci</taxon>
        <taxon>Thermales</taxon>
        <taxon>Thermaceae</taxon>
        <taxon>Thermus</taxon>
    </lineage>
</organism>